<dbReference type="EMBL" id="BN001308">
    <property type="protein sequence ID" value="CBF87245.1"/>
    <property type="molecule type" value="Genomic_DNA"/>
</dbReference>
<dbReference type="EMBL" id="AACD01000172">
    <property type="protein sequence ID" value="EAA66316.1"/>
    <property type="molecule type" value="Genomic_DNA"/>
</dbReference>
<dbReference type="RefSeq" id="XP_682518.1">
    <property type="nucleotide sequence ID" value="XM_677426.1"/>
</dbReference>
<dbReference type="PDB" id="5X9K">
    <property type="method" value="X-ray"/>
    <property type="resolution" value="1.80 A"/>
    <property type="chains" value="A/B=46-174"/>
</dbReference>
<dbReference type="PDBsum" id="5X9K"/>
<dbReference type="SMR" id="Q5AR31"/>
<dbReference type="STRING" id="227321.Q5AR31"/>
<dbReference type="EnsemblFungi" id="CBF87245">
    <property type="protein sequence ID" value="CBF87245"/>
    <property type="gene ID" value="ANIA_09249"/>
</dbReference>
<dbReference type="KEGG" id="ani:ANIA_09249"/>
<dbReference type="VEuPathDB" id="FungiDB:AN9249"/>
<dbReference type="eggNOG" id="ENOG502SZV0">
    <property type="taxonomic scope" value="Eukaryota"/>
</dbReference>
<dbReference type="HOGENOM" id="CLU_1540028_0_0_1"/>
<dbReference type="InParanoid" id="Q5AR31"/>
<dbReference type="OMA" id="TDIGPYA"/>
<dbReference type="OrthoDB" id="3758478at2759"/>
<dbReference type="UniPathway" id="UPA00213"/>
<dbReference type="Proteomes" id="UP000000560">
    <property type="component" value="Chromosome VIII"/>
</dbReference>
<dbReference type="GO" id="GO:1900560">
    <property type="term" value="P:austinol biosynthetic process"/>
    <property type="evidence" value="ECO:0000315"/>
    <property type="project" value="AspGD"/>
</dbReference>
<dbReference type="GO" id="GO:1900563">
    <property type="term" value="P:dehydroaustinol biosynthetic process"/>
    <property type="evidence" value="ECO:0000315"/>
    <property type="project" value="AspGD"/>
</dbReference>
<dbReference type="GO" id="GO:0016114">
    <property type="term" value="P:terpenoid biosynthetic process"/>
    <property type="evidence" value="ECO:0007669"/>
    <property type="project" value="UniProtKB-UniPathway"/>
</dbReference>
<dbReference type="InterPro" id="IPR050977">
    <property type="entry name" value="Fungal_Meroterpenoid_Isomerase"/>
</dbReference>
<dbReference type="PANTHER" id="PTHR39598:SF1">
    <property type="entry name" value="AUSTINOID BIOSYNTHESIS CLUSTERS PROTEIN F-RELATED"/>
    <property type="match status" value="1"/>
</dbReference>
<dbReference type="PANTHER" id="PTHR39598">
    <property type="entry name" value="AUSTINOL SYNTHESIS PROTEIN F-RELATED"/>
    <property type="match status" value="1"/>
</dbReference>
<protein>
    <recommendedName>
        <fullName evidence="6">Austinoid biosynthesis clusters protein H</fullName>
    </recommendedName>
</protein>
<gene>
    <name evidence="6" type="primary">ausH</name>
    <name type="ORF">AN9249</name>
</gene>
<evidence type="ECO:0000269" key="1">
    <source>
    </source>
</evidence>
<evidence type="ECO:0000269" key="2">
    <source>
    </source>
</evidence>
<evidence type="ECO:0000269" key="3">
    <source>
    </source>
</evidence>
<evidence type="ECO:0000269" key="4">
    <source>
    </source>
</evidence>
<evidence type="ECO:0000269" key="5">
    <source>
    </source>
</evidence>
<evidence type="ECO:0000303" key="6">
    <source>
    </source>
</evidence>
<evidence type="ECO:0000305" key="7"/>
<evidence type="ECO:0000305" key="8">
    <source>
    </source>
</evidence>
<evidence type="ECO:0007744" key="9">
    <source>
        <dbReference type="PDB" id="5X9K"/>
    </source>
</evidence>
<evidence type="ECO:0007829" key="10">
    <source>
        <dbReference type="PDB" id="5X9K"/>
    </source>
</evidence>
<comment type="function">
    <text evidence="1 2 3 5">Part of the gene cluster B that mediates the biosynthesis of austinol and dehydroaustinol, two fungal meroterpenoids (PubMed:22329759). The first step of the pathway is the synthesis of 3,5-dimethylorsellinic acid by the polyketide synthase ausA (PubMed:22329759). 3,5-dimethylorsellinic acid is then prenylated by the polyprenyl transferase ausN (PubMed:22329759). Further epoxidation by the FAD-dependent monooxygenase ausM and cyclization by the probable terpene cyclase ausL lead to the formation of protoaustinoid A (PubMed:22329759). Protoaustinoid A is then oxidized to spiro-lactone preaustinoid A3 by the combined action of the FAD-binding monooxygenases ausB and ausC, and the dioxygenase ausE (PubMed:22329759, PubMed:23865690). Acid-catalyzed keto-rearrangement and ring contraction of the tetraketide portion of preaustinoid A3 by ausJ lead to the formation of preaustinoid A4 (PubMed:22329759). The aldo-keto reductase ausK, with the help of ausH, is involved in the next step by transforming preaustinoid A4 into isoaustinone which is in turn hydroxylated by the P450 monooxygenase ausI to form austinolide (PubMed:22329759). Finally, the cytochrome P450 monooxygenase ausG modifies austinolide to austinol (PubMed:22329759). Austinol can be further modified to dehydroaustinol which forms a diffusible complex with diorcinol that initiates conidiation (PubMed:22234162, PubMed:22329759). Due to genetic rearrangements of the clusters and the subsequent loss of some enzymes, the end products of the Emericella nidulans austinoid biosynthesis clusters are austinol and dehydroaustinol, even if additional enzymes, such as the O-acetyltransferase ausQ and the cytochrome P450 monooxygenase ausR are still functional (PubMed:29076725).</text>
</comment>
<comment type="pathway">
    <text evidence="2">Secondary metabolite biosynthesis; terpenoid biosynthesis.</text>
</comment>
<comment type="subunit">
    <text evidence="4">Homodimer.</text>
</comment>
<comment type="disruption phenotype">
    <text evidence="2">Impairs the synthesis of austinol and dehydroaustinol and accumulates (5'R)-isoaustinone (PubMed:22329759).</text>
</comment>
<comment type="miscellaneous">
    <text evidence="8">In A.calidoustus, the austinoid gene cluster lies on a contiguous DNA region, while clusters from E.nidulans and P.brasilianum are split in their respective genomes. Genetic rearrangements provoked variability among the clusters and E.nidulans produces the least number of austionoid derivatives with the end products austinol and dehydroaustinol, while P.brasilianum can produce until acetoxydehydroaustin, and A.calidoustus produces the highest number of identified derivatives.</text>
</comment>
<comment type="similarity">
    <text evidence="7">Belongs to the trt14 isomerase family.</text>
</comment>
<reference key="1">
    <citation type="journal article" date="2005" name="Nature">
        <title>Sequencing of Aspergillus nidulans and comparative analysis with A. fumigatus and A. oryzae.</title>
        <authorList>
            <person name="Galagan J.E."/>
            <person name="Calvo S.E."/>
            <person name="Cuomo C."/>
            <person name="Ma L.-J."/>
            <person name="Wortman J.R."/>
            <person name="Batzoglou S."/>
            <person name="Lee S.-I."/>
            <person name="Bastuerkmen M."/>
            <person name="Spevak C.C."/>
            <person name="Clutterbuck J."/>
            <person name="Kapitonov V."/>
            <person name="Jurka J."/>
            <person name="Scazzocchio C."/>
            <person name="Farman M.L."/>
            <person name="Butler J."/>
            <person name="Purcell S."/>
            <person name="Harris S."/>
            <person name="Braus G.H."/>
            <person name="Draht O."/>
            <person name="Busch S."/>
            <person name="D'Enfert C."/>
            <person name="Bouchier C."/>
            <person name="Goldman G.H."/>
            <person name="Bell-Pedersen D."/>
            <person name="Griffiths-Jones S."/>
            <person name="Doonan J.H."/>
            <person name="Yu J."/>
            <person name="Vienken K."/>
            <person name="Pain A."/>
            <person name="Freitag M."/>
            <person name="Selker E.U."/>
            <person name="Archer D.B."/>
            <person name="Penalva M.A."/>
            <person name="Oakley B.R."/>
            <person name="Momany M."/>
            <person name="Tanaka T."/>
            <person name="Kumagai T."/>
            <person name="Asai K."/>
            <person name="Machida M."/>
            <person name="Nierman W.C."/>
            <person name="Denning D.W."/>
            <person name="Caddick M.X."/>
            <person name="Hynes M."/>
            <person name="Paoletti M."/>
            <person name="Fischer R."/>
            <person name="Miller B.L."/>
            <person name="Dyer P.S."/>
            <person name="Sachs M.S."/>
            <person name="Osmani S.A."/>
            <person name="Birren B.W."/>
        </authorList>
    </citation>
    <scope>NUCLEOTIDE SEQUENCE [LARGE SCALE GENOMIC DNA]</scope>
    <source>
        <strain>FGSC A4 / ATCC 38163 / CBS 112.46 / NRRL 194 / M139</strain>
    </source>
</reference>
<reference key="2">
    <citation type="journal article" date="2009" name="Fungal Genet. Biol.">
        <title>The 2008 update of the Aspergillus nidulans genome annotation: a community effort.</title>
        <authorList>
            <person name="Wortman J.R."/>
            <person name="Gilsenan J.M."/>
            <person name="Joardar V."/>
            <person name="Deegan J."/>
            <person name="Clutterbuck J."/>
            <person name="Andersen M.R."/>
            <person name="Archer D."/>
            <person name="Bencina M."/>
            <person name="Braus G."/>
            <person name="Coutinho P."/>
            <person name="von Dohren H."/>
            <person name="Doonan J."/>
            <person name="Driessen A.J."/>
            <person name="Durek P."/>
            <person name="Espeso E."/>
            <person name="Fekete E."/>
            <person name="Flipphi M."/>
            <person name="Estrada C.G."/>
            <person name="Geysens S."/>
            <person name="Goldman G."/>
            <person name="de Groot P.W."/>
            <person name="Hansen K."/>
            <person name="Harris S.D."/>
            <person name="Heinekamp T."/>
            <person name="Helmstaedt K."/>
            <person name="Henrissat B."/>
            <person name="Hofmann G."/>
            <person name="Homan T."/>
            <person name="Horio T."/>
            <person name="Horiuchi H."/>
            <person name="James S."/>
            <person name="Jones M."/>
            <person name="Karaffa L."/>
            <person name="Karanyi Z."/>
            <person name="Kato M."/>
            <person name="Keller N."/>
            <person name="Kelly D.E."/>
            <person name="Kiel J.A."/>
            <person name="Kim J.M."/>
            <person name="van der Klei I.J."/>
            <person name="Klis F.M."/>
            <person name="Kovalchuk A."/>
            <person name="Krasevec N."/>
            <person name="Kubicek C.P."/>
            <person name="Liu B."/>
            <person name="Maccabe A."/>
            <person name="Meyer V."/>
            <person name="Mirabito P."/>
            <person name="Miskei M."/>
            <person name="Mos M."/>
            <person name="Mullins J."/>
            <person name="Nelson D.R."/>
            <person name="Nielsen J."/>
            <person name="Oakley B.R."/>
            <person name="Osmani S.A."/>
            <person name="Pakula T."/>
            <person name="Paszewski A."/>
            <person name="Paulsen I."/>
            <person name="Pilsyk S."/>
            <person name="Pocsi I."/>
            <person name="Punt P.J."/>
            <person name="Ram A.F."/>
            <person name="Ren Q."/>
            <person name="Robellet X."/>
            <person name="Robson G."/>
            <person name="Seiboth B."/>
            <person name="van Solingen P."/>
            <person name="Specht T."/>
            <person name="Sun J."/>
            <person name="Taheri-Talesh N."/>
            <person name="Takeshita N."/>
            <person name="Ussery D."/>
            <person name="vanKuyk P.A."/>
            <person name="Visser H."/>
            <person name="van de Vondervoort P.J."/>
            <person name="de Vries R.P."/>
            <person name="Walton J."/>
            <person name="Xiang X."/>
            <person name="Xiong Y."/>
            <person name="Zeng A.P."/>
            <person name="Brandt B.W."/>
            <person name="Cornell M.J."/>
            <person name="van den Hondel C.A."/>
            <person name="Visser J."/>
            <person name="Oliver S.G."/>
            <person name="Turner G."/>
        </authorList>
    </citation>
    <scope>GENOME REANNOTATION</scope>
    <source>
        <strain>FGSC A4 / ATCC 38163 / CBS 112.46 / NRRL 194 / M139</strain>
    </source>
</reference>
<reference key="3">
    <citation type="journal article" date="2012" name="ACS Chem. Biol.">
        <title>Signaling the induction of sporulation involves the interaction of two secondary metabolites in Aspergillus nidulans.</title>
        <authorList>
            <person name="Rodriguez-Urra A.B."/>
            <person name="Jimenez C."/>
            <person name="Nieto M.I."/>
            <person name="Rodriguez J."/>
            <person name="Hayashi H."/>
            <person name="Ugalde U."/>
        </authorList>
    </citation>
    <scope>FUNCTION</scope>
</reference>
<reference key="4">
    <citation type="journal article" date="2012" name="J. Am. Chem. Soc.">
        <title>Two separate gene clusters encode the biosynthetic pathway for the meroterpenoids austinol and dehydroaustinol in Aspergillus nidulans.</title>
        <authorList>
            <person name="Lo H.C."/>
            <person name="Entwistle R."/>
            <person name="Guo C.J."/>
            <person name="Ahuja M."/>
            <person name="Szewczyk E."/>
            <person name="Hung J.H."/>
            <person name="Chiang Y.M."/>
            <person name="Oakley B.R."/>
            <person name="Wang C.C."/>
        </authorList>
    </citation>
    <scope>FUNCTION</scope>
    <scope>DISRUPTION PHENOTYPE</scope>
</reference>
<reference key="5">
    <citation type="journal article" date="2013" name="J. Am. Chem. Soc.">
        <title>Spiro-ring formation is catalyzed by a multifunctional dioxygenase in austinol biosynthesis.</title>
        <authorList>
            <person name="Matsuda Y."/>
            <person name="Awakawa T."/>
            <person name="Wakimoto T."/>
            <person name="Abe I."/>
        </authorList>
    </citation>
    <scope>FUNCTION</scope>
</reference>
<reference key="6">
    <citation type="journal article" date="2017" name="ACS Chem. Biol.">
        <title>Rewiring of the austinoid biosynthetic pathway in filamentous fungi.</title>
        <authorList>
            <person name="Mattern D.J."/>
            <person name="Valiante V."/>
            <person name="Horn F."/>
            <person name="Petzke L."/>
            <person name="Brakhage A.A."/>
        </authorList>
    </citation>
    <scope>FUNCTION</scope>
</reference>
<reference evidence="9" key="7">
    <citation type="journal article" date="2017" name="Nat. Chem. Biol.">
        <title>Molecular basis for the unusual ring reconstruction in fungal meroterpenoid biogenesis.</title>
        <authorList>
            <person name="Mori T."/>
            <person name="Iwabuchi T."/>
            <person name="Hoshino S."/>
            <person name="Wang H."/>
            <person name="Matsuda Y."/>
            <person name="Abe I."/>
        </authorList>
    </citation>
    <scope>X-RAY CRYSTALLOGRAPHY (1.80 ANGSTROMS) OF 46-174</scope>
    <scope>SUBUNIT</scope>
</reference>
<name>AUSH_EMENI</name>
<sequence length="174" mass="19411">MVMTNILCQILSDDLPELPPCREPSKGMIVGNLGMTSNTMTTEGPFAKLDVESVLSFMSPSCTLRSFPSSLGKPALQTKEESKADFQGLKDFFYNFQLRVKDGAEPVIDEPARKVVLHIEGKGDSLVGRFETEYVYILQINEEGTMVEDFFQFADSATRDAWGKKIEAHFSARN</sequence>
<feature type="chain" id="PRO_0000436489" description="Austinoid biosynthesis clusters protein H">
    <location>
        <begin position="1"/>
        <end position="174"/>
    </location>
</feature>
<feature type="helix" evidence="10">
    <location>
        <begin position="46"/>
        <end position="48"/>
    </location>
</feature>
<feature type="helix" evidence="10">
    <location>
        <begin position="52"/>
        <end position="55"/>
    </location>
</feature>
<feature type="strand" evidence="10">
    <location>
        <begin position="58"/>
        <end position="68"/>
    </location>
</feature>
<feature type="strand" evidence="10">
    <location>
        <begin position="75"/>
        <end position="78"/>
    </location>
</feature>
<feature type="helix" evidence="10">
    <location>
        <begin position="79"/>
        <end position="92"/>
    </location>
</feature>
<feature type="strand" evidence="10">
    <location>
        <begin position="93"/>
        <end position="100"/>
    </location>
</feature>
<feature type="strand" evidence="10">
    <location>
        <begin position="107"/>
        <end position="109"/>
    </location>
</feature>
<feature type="turn" evidence="10">
    <location>
        <begin position="110"/>
        <end position="113"/>
    </location>
</feature>
<feature type="strand" evidence="10">
    <location>
        <begin position="114"/>
        <end position="125"/>
    </location>
</feature>
<feature type="strand" evidence="10">
    <location>
        <begin position="128"/>
        <end position="140"/>
    </location>
</feature>
<feature type="strand" evidence="10">
    <location>
        <begin position="144"/>
        <end position="154"/>
    </location>
</feature>
<feature type="helix" evidence="10">
    <location>
        <begin position="156"/>
        <end position="173"/>
    </location>
</feature>
<organism>
    <name type="scientific">Emericella nidulans (strain FGSC A4 / ATCC 38163 / CBS 112.46 / NRRL 194 / M139)</name>
    <name type="common">Aspergillus nidulans</name>
    <dbReference type="NCBI Taxonomy" id="227321"/>
    <lineage>
        <taxon>Eukaryota</taxon>
        <taxon>Fungi</taxon>
        <taxon>Dikarya</taxon>
        <taxon>Ascomycota</taxon>
        <taxon>Pezizomycotina</taxon>
        <taxon>Eurotiomycetes</taxon>
        <taxon>Eurotiomycetidae</taxon>
        <taxon>Eurotiales</taxon>
        <taxon>Aspergillaceae</taxon>
        <taxon>Aspergillus</taxon>
        <taxon>Aspergillus subgen. Nidulantes</taxon>
    </lineage>
</organism>
<proteinExistence type="evidence at protein level"/>
<keyword id="KW-0002">3D-structure</keyword>
<keyword id="KW-1185">Reference proteome</keyword>
<accession>Q5AR31</accession>
<accession>C8VQ86</accession>